<sequence length="345" mass="38523">MKEIKSIEFKNEVLYLIDQRKLPNSYEIFECKTYRDVNFAIKEMVVRGAPAIGAAAAYGVVLAAKEFLKEDREIFFEKIEEALEVIANSRPTAVNLMWAVKRMKKVIEKNKELELIDIYQALKKEADSIYLEDIETNKKMAKFGNEVIKENAVILTHCNTGALATVGYGTALGVIREAHYSGKNIFVYADETRPRLQGSKLTAWELVQEGIPAKLIADSVAATLIRDGKIDVILVGADRIALNGDTANKIGTFMLSVIAKVYNVPFYVVAPTSTIDFEIESGKEIIIEERSPEEVTHINGVRIAPEGIEVYNPAFDVTPHENITGIITEKGIIKPPYKENILKLK</sequence>
<feature type="chain" id="PRO_0000357257" description="Methylthioribose-1-phosphate isomerase">
    <location>
        <begin position="1"/>
        <end position="345"/>
    </location>
</feature>
<feature type="active site" description="Proton donor" evidence="1">
    <location>
        <position position="238"/>
    </location>
</feature>
<feature type="binding site" evidence="1">
    <location>
        <begin position="47"/>
        <end position="49"/>
    </location>
    <ligand>
        <name>substrate</name>
    </ligand>
</feature>
<feature type="binding site" evidence="1">
    <location>
        <position position="90"/>
    </location>
    <ligand>
        <name>substrate</name>
    </ligand>
</feature>
<feature type="binding site" evidence="1">
    <location>
        <position position="197"/>
    </location>
    <ligand>
        <name>substrate</name>
    </ligand>
</feature>
<feature type="binding site" evidence="1">
    <location>
        <begin position="248"/>
        <end position="249"/>
    </location>
    <ligand>
        <name>substrate</name>
    </ligand>
</feature>
<feature type="site" description="Transition state stabilizer" evidence="1">
    <location>
        <position position="158"/>
    </location>
</feature>
<name>MTNA_THEPX</name>
<accession>B0K2V6</accession>
<dbReference type="EC" id="5.3.1.23" evidence="1"/>
<dbReference type="EMBL" id="CP000923">
    <property type="protein sequence ID" value="ABY93161.1"/>
    <property type="molecule type" value="Genomic_DNA"/>
</dbReference>
<dbReference type="RefSeq" id="WP_003867676.1">
    <property type="nucleotide sequence ID" value="NC_010320.1"/>
</dbReference>
<dbReference type="SMR" id="B0K2V6"/>
<dbReference type="KEGG" id="tex:Teth514_1881"/>
<dbReference type="HOGENOM" id="CLU_016218_1_2_9"/>
<dbReference type="UniPathway" id="UPA00904">
    <property type="reaction ID" value="UER00874"/>
</dbReference>
<dbReference type="Proteomes" id="UP000002155">
    <property type="component" value="Chromosome"/>
</dbReference>
<dbReference type="GO" id="GO:0046523">
    <property type="term" value="F:S-methyl-5-thioribose-1-phosphate isomerase activity"/>
    <property type="evidence" value="ECO:0007669"/>
    <property type="project" value="UniProtKB-UniRule"/>
</dbReference>
<dbReference type="GO" id="GO:0019509">
    <property type="term" value="P:L-methionine salvage from methylthioadenosine"/>
    <property type="evidence" value="ECO:0007669"/>
    <property type="project" value="UniProtKB-UniRule"/>
</dbReference>
<dbReference type="FunFam" id="1.20.120.420:FF:000003">
    <property type="entry name" value="Methylthioribose-1-phosphate isomerase"/>
    <property type="match status" value="1"/>
</dbReference>
<dbReference type="FunFam" id="3.40.50.10470:FF:000006">
    <property type="entry name" value="Methylthioribose-1-phosphate isomerase"/>
    <property type="match status" value="1"/>
</dbReference>
<dbReference type="Gene3D" id="1.20.120.420">
    <property type="entry name" value="translation initiation factor eif-2b, domain 1"/>
    <property type="match status" value="1"/>
</dbReference>
<dbReference type="Gene3D" id="3.40.50.10470">
    <property type="entry name" value="Translation initiation factor eif-2b, domain 2"/>
    <property type="match status" value="1"/>
</dbReference>
<dbReference type="HAMAP" id="MF_01678">
    <property type="entry name" value="Salvage_MtnA"/>
    <property type="match status" value="1"/>
</dbReference>
<dbReference type="InterPro" id="IPR000649">
    <property type="entry name" value="IF-2B-related"/>
</dbReference>
<dbReference type="InterPro" id="IPR005251">
    <property type="entry name" value="IF-M1Pi"/>
</dbReference>
<dbReference type="InterPro" id="IPR042529">
    <property type="entry name" value="IF_2B-like_C"/>
</dbReference>
<dbReference type="InterPro" id="IPR011559">
    <property type="entry name" value="Initiation_fac_2B_a/b/d"/>
</dbReference>
<dbReference type="InterPro" id="IPR027363">
    <property type="entry name" value="M1Pi_N"/>
</dbReference>
<dbReference type="InterPro" id="IPR037171">
    <property type="entry name" value="NagB/RpiA_transferase-like"/>
</dbReference>
<dbReference type="NCBIfam" id="TIGR00524">
    <property type="entry name" value="eIF-2B_rel"/>
    <property type="match status" value="1"/>
</dbReference>
<dbReference type="NCBIfam" id="NF004326">
    <property type="entry name" value="PRK05720.1"/>
    <property type="match status" value="1"/>
</dbReference>
<dbReference type="NCBIfam" id="TIGR00512">
    <property type="entry name" value="salvage_mtnA"/>
    <property type="match status" value="1"/>
</dbReference>
<dbReference type="PANTHER" id="PTHR43475">
    <property type="entry name" value="METHYLTHIORIBOSE-1-PHOSPHATE ISOMERASE"/>
    <property type="match status" value="1"/>
</dbReference>
<dbReference type="PANTHER" id="PTHR43475:SF1">
    <property type="entry name" value="METHYLTHIORIBOSE-1-PHOSPHATE ISOMERASE"/>
    <property type="match status" value="1"/>
</dbReference>
<dbReference type="Pfam" id="PF01008">
    <property type="entry name" value="IF-2B"/>
    <property type="match status" value="1"/>
</dbReference>
<dbReference type="SUPFAM" id="SSF100950">
    <property type="entry name" value="NagB/RpiA/CoA transferase-like"/>
    <property type="match status" value="1"/>
</dbReference>
<protein>
    <recommendedName>
        <fullName evidence="1">Methylthioribose-1-phosphate isomerase</fullName>
        <shortName evidence="1">M1Pi</shortName>
        <shortName evidence="1">MTR-1-P isomerase</shortName>
        <ecNumber evidence="1">5.3.1.23</ecNumber>
    </recommendedName>
    <alternativeName>
        <fullName evidence="1">S-methyl-5-thioribose-1-phosphate isomerase</fullName>
    </alternativeName>
</protein>
<comment type="function">
    <text evidence="1">Catalyzes the interconversion of methylthioribose-1-phosphate (MTR-1-P) into methylthioribulose-1-phosphate (MTRu-1-P).</text>
</comment>
<comment type="catalytic activity">
    <reaction evidence="1">
        <text>5-(methylsulfanyl)-alpha-D-ribose 1-phosphate = 5-(methylsulfanyl)-D-ribulose 1-phosphate</text>
        <dbReference type="Rhea" id="RHEA:19989"/>
        <dbReference type="ChEBI" id="CHEBI:58533"/>
        <dbReference type="ChEBI" id="CHEBI:58548"/>
        <dbReference type="EC" id="5.3.1.23"/>
    </reaction>
</comment>
<comment type="pathway">
    <text evidence="1">Amino-acid biosynthesis; L-methionine biosynthesis via salvage pathway; L-methionine from S-methyl-5-thio-alpha-D-ribose 1-phosphate: step 1/6.</text>
</comment>
<comment type="similarity">
    <text evidence="2">Belongs to the eIF-2B alpha/beta/delta subunits family. MtnA subfamily.</text>
</comment>
<gene>
    <name evidence="1" type="primary">mtnA</name>
    <name type="ordered locus">Teth514_1881</name>
</gene>
<proteinExistence type="inferred from homology"/>
<reference key="1">
    <citation type="submission" date="2008-01" db="EMBL/GenBank/DDBJ databases">
        <title>Complete sequence of Thermoanaerobacter sp. X514.</title>
        <authorList>
            <consortium name="US DOE Joint Genome Institute"/>
            <person name="Copeland A."/>
            <person name="Lucas S."/>
            <person name="Lapidus A."/>
            <person name="Barry K."/>
            <person name="Glavina del Rio T."/>
            <person name="Dalin E."/>
            <person name="Tice H."/>
            <person name="Pitluck S."/>
            <person name="Bruce D."/>
            <person name="Goodwin L."/>
            <person name="Saunders E."/>
            <person name="Brettin T."/>
            <person name="Detter J.C."/>
            <person name="Han C."/>
            <person name="Schmutz J."/>
            <person name="Larimer F."/>
            <person name="Land M."/>
            <person name="Hauser L."/>
            <person name="Kyrpides N."/>
            <person name="Kim E."/>
            <person name="Hemme C."/>
            <person name="Fields M.W."/>
            <person name="He Z."/>
            <person name="Zhou J."/>
            <person name="Richardson P."/>
        </authorList>
    </citation>
    <scope>NUCLEOTIDE SEQUENCE [LARGE SCALE GENOMIC DNA]</scope>
    <source>
        <strain>X514</strain>
    </source>
</reference>
<evidence type="ECO:0000255" key="1">
    <source>
        <dbReference type="HAMAP-Rule" id="MF_01678"/>
    </source>
</evidence>
<evidence type="ECO:0000305" key="2"/>
<keyword id="KW-0028">Amino-acid biosynthesis</keyword>
<keyword id="KW-0413">Isomerase</keyword>
<keyword id="KW-0486">Methionine biosynthesis</keyword>
<organism>
    <name type="scientific">Thermoanaerobacter sp. (strain X514)</name>
    <dbReference type="NCBI Taxonomy" id="399726"/>
    <lineage>
        <taxon>Bacteria</taxon>
        <taxon>Bacillati</taxon>
        <taxon>Bacillota</taxon>
        <taxon>Clostridia</taxon>
        <taxon>Thermoanaerobacterales</taxon>
        <taxon>Thermoanaerobacteraceae</taxon>
        <taxon>Thermoanaerobacter</taxon>
    </lineage>
</organism>